<proteinExistence type="inferred from homology"/>
<protein>
    <recommendedName>
        <fullName evidence="1">Trigger factor</fullName>
        <shortName evidence="1">TF</shortName>
        <ecNumber evidence="1">5.2.1.8</ecNumber>
    </recommendedName>
    <alternativeName>
        <fullName evidence="1">PPIase</fullName>
    </alternativeName>
</protein>
<accession>Q72CE9</accession>
<name>TIG_NITV2</name>
<comment type="function">
    <text evidence="1">Involved in protein export. Acts as a chaperone by maintaining the newly synthesized protein in an open conformation. Functions as a peptidyl-prolyl cis-trans isomerase.</text>
</comment>
<comment type="catalytic activity">
    <reaction evidence="1">
        <text>[protein]-peptidylproline (omega=180) = [protein]-peptidylproline (omega=0)</text>
        <dbReference type="Rhea" id="RHEA:16237"/>
        <dbReference type="Rhea" id="RHEA-COMP:10747"/>
        <dbReference type="Rhea" id="RHEA-COMP:10748"/>
        <dbReference type="ChEBI" id="CHEBI:83833"/>
        <dbReference type="ChEBI" id="CHEBI:83834"/>
        <dbReference type="EC" id="5.2.1.8"/>
    </reaction>
</comment>
<comment type="subcellular location">
    <subcellularLocation>
        <location>Cytoplasm</location>
    </subcellularLocation>
    <text evidence="1">About half TF is bound to the ribosome near the polypeptide exit tunnel while the other half is free in the cytoplasm.</text>
</comment>
<comment type="domain">
    <text evidence="1">Consists of 3 domains; the N-terminus binds the ribosome, the middle domain has PPIase activity, while the C-terminus has intrinsic chaperone activity on its own.</text>
</comment>
<comment type="similarity">
    <text evidence="1">Belongs to the FKBP-type PPIase family. Tig subfamily.</text>
</comment>
<dbReference type="EC" id="5.2.1.8" evidence="1"/>
<dbReference type="EMBL" id="AE017285">
    <property type="protein sequence ID" value="AAS95812.1"/>
    <property type="molecule type" value="Genomic_DNA"/>
</dbReference>
<dbReference type="RefSeq" id="WP_010938629.1">
    <property type="nucleotide sequence ID" value="NC_002937.3"/>
</dbReference>
<dbReference type="RefSeq" id="YP_010553.1">
    <property type="nucleotide sequence ID" value="NC_002937.3"/>
</dbReference>
<dbReference type="SMR" id="Q72CE9"/>
<dbReference type="STRING" id="882.DVU_1334"/>
<dbReference type="PaxDb" id="882-DVU_1334"/>
<dbReference type="EnsemblBacteria" id="AAS95812">
    <property type="protein sequence ID" value="AAS95812"/>
    <property type="gene ID" value="DVU_1334"/>
</dbReference>
<dbReference type="KEGG" id="dvu:DVU_1334"/>
<dbReference type="PATRIC" id="fig|882.5.peg.1245"/>
<dbReference type="eggNOG" id="COG0544">
    <property type="taxonomic scope" value="Bacteria"/>
</dbReference>
<dbReference type="HOGENOM" id="CLU_033058_3_1_7"/>
<dbReference type="OrthoDB" id="9767721at2"/>
<dbReference type="PhylomeDB" id="Q72CE9"/>
<dbReference type="Proteomes" id="UP000002194">
    <property type="component" value="Chromosome"/>
</dbReference>
<dbReference type="GO" id="GO:0005737">
    <property type="term" value="C:cytoplasm"/>
    <property type="evidence" value="ECO:0007669"/>
    <property type="project" value="UniProtKB-SubCell"/>
</dbReference>
<dbReference type="GO" id="GO:0003755">
    <property type="term" value="F:peptidyl-prolyl cis-trans isomerase activity"/>
    <property type="evidence" value="ECO:0007669"/>
    <property type="project" value="UniProtKB-UniRule"/>
</dbReference>
<dbReference type="GO" id="GO:0044183">
    <property type="term" value="F:protein folding chaperone"/>
    <property type="evidence" value="ECO:0007669"/>
    <property type="project" value="TreeGrafter"/>
</dbReference>
<dbReference type="GO" id="GO:0043022">
    <property type="term" value="F:ribosome binding"/>
    <property type="evidence" value="ECO:0007669"/>
    <property type="project" value="TreeGrafter"/>
</dbReference>
<dbReference type="GO" id="GO:0051083">
    <property type="term" value="P:'de novo' cotranslational protein folding"/>
    <property type="evidence" value="ECO:0007669"/>
    <property type="project" value="TreeGrafter"/>
</dbReference>
<dbReference type="GO" id="GO:0051301">
    <property type="term" value="P:cell division"/>
    <property type="evidence" value="ECO:0007669"/>
    <property type="project" value="UniProtKB-KW"/>
</dbReference>
<dbReference type="GO" id="GO:0061077">
    <property type="term" value="P:chaperone-mediated protein folding"/>
    <property type="evidence" value="ECO:0007669"/>
    <property type="project" value="TreeGrafter"/>
</dbReference>
<dbReference type="GO" id="GO:0015031">
    <property type="term" value="P:protein transport"/>
    <property type="evidence" value="ECO:0007669"/>
    <property type="project" value="UniProtKB-UniRule"/>
</dbReference>
<dbReference type="GO" id="GO:0043335">
    <property type="term" value="P:protein unfolding"/>
    <property type="evidence" value="ECO:0007669"/>
    <property type="project" value="TreeGrafter"/>
</dbReference>
<dbReference type="Gene3D" id="3.10.50.40">
    <property type="match status" value="1"/>
</dbReference>
<dbReference type="Gene3D" id="3.30.70.1050">
    <property type="entry name" value="Trigger factor ribosome-binding domain"/>
    <property type="match status" value="1"/>
</dbReference>
<dbReference type="Gene3D" id="1.10.3120.10">
    <property type="entry name" value="Trigger factor, C-terminal domain"/>
    <property type="match status" value="1"/>
</dbReference>
<dbReference type="HAMAP" id="MF_00303">
    <property type="entry name" value="Trigger_factor_Tig"/>
    <property type="match status" value="1"/>
</dbReference>
<dbReference type="InterPro" id="IPR046357">
    <property type="entry name" value="PPIase_dom_sf"/>
</dbReference>
<dbReference type="InterPro" id="IPR005215">
    <property type="entry name" value="Trig_fac"/>
</dbReference>
<dbReference type="InterPro" id="IPR008880">
    <property type="entry name" value="Trigger_fac_C"/>
</dbReference>
<dbReference type="InterPro" id="IPR037041">
    <property type="entry name" value="Trigger_fac_C_sf"/>
</dbReference>
<dbReference type="InterPro" id="IPR008881">
    <property type="entry name" value="Trigger_fac_ribosome-bd_bac"/>
</dbReference>
<dbReference type="InterPro" id="IPR036611">
    <property type="entry name" value="Trigger_fac_ribosome-bd_sf"/>
</dbReference>
<dbReference type="InterPro" id="IPR027304">
    <property type="entry name" value="Trigger_fact/SurA_dom_sf"/>
</dbReference>
<dbReference type="NCBIfam" id="TIGR00115">
    <property type="entry name" value="tig"/>
    <property type="match status" value="1"/>
</dbReference>
<dbReference type="PANTHER" id="PTHR30560">
    <property type="entry name" value="TRIGGER FACTOR CHAPERONE AND PEPTIDYL-PROLYL CIS/TRANS ISOMERASE"/>
    <property type="match status" value="1"/>
</dbReference>
<dbReference type="PANTHER" id="PTHR30560:SF3">
    <property type="entry name" value="TRIGGER FACTOR-LIKE PROTEIN TIG, CHLOROPLASTIC"/>
    <property type="match status" value="1"/>
</dbReference>
<dbReference type="Pfam" id="PF05698">
    <property type="entry name" value="Trigger_C"/>
    <property type="match status" value="1"/>
</dbReference>
<dbReference type="Pfam" id="PF05697">
    <property type="entry name" value="Trigger_N"/>
    <property type="match status" value="1"/>
</dbReference>
<dbReference type="PIRSF" id="PIRSF003095">
    <property type="entry name" value="Trigger_factor"/>
    <property type="match status" value="1"/>
</dbReference>
<dbReference type="SUPFAM" id="SSF54534">
    <property type="entry name" value="FKBP-like"/>
    <property type="match status" value="1"/>
</dbReference>
<dbReference type="SUPFAM" id="SSF109998">
    <property type="entry name" value="Triger factor/SurA peptide-binding domain-like"/>
    <property type="match status" value="1"/>
</dbReference>
<dbReference type="SUPFAM" id="SSF102735">
    <property type="entry name" value="Trigger factor ribosome-binding domain"/>
    <property type="match status" value="1"/>
</dbReference>
<feature type="chain" id="PRO_0000179346" description="Trigger factor">
    <location>
        <begin position="1"/>
        <end position="433"/>
    </location>
</feature>
<feature type="domain" description="PPIase FKBP-type" evidence="1">
    <location>
        <begin position="163"/>
        <end position="248"/>
    </location>
</feature>
<organism>
    <name type="scientific">Nitratidesulfovibrio vulgaris (strain ATCC 29579 / DSM 644 / CCUG 34227 / NCIMB 8303 / VKM B-1760 / Hildenborough)</name>
    <name type="common">Desulfovibrio vulgaris</name>
    <dbReference type="NCBI Taxonomy" id="882"/>
    <lineage>
        <taxon>Bacteria</taxon>
        <taxon>Pseudomonadati</taxon>
        <taxon>Thermodesulfobacteriota</taxon>
        <taxon>Desulfovibrionia</taxon>
        <taxon>Desulfovibrionales</taxon>
        <taxon>Desulfovibrionaceae</taxon>
        <taxon>Nitratidesulfovibrio</taxon>
    </lineage>
</organism>
<sequence length="433" mass="48295">MEYKVEDVSPVKKKVNVTVPVEEVDAALGAAIAMYRTSVNLDGFRKGKVPASIVENRFRKEIYAEATQDLVNVHINEIVTSLAVSPLSRIDFDGGELERGKEFSYTISFEVMPQFDLPDYEGFAVEQEKAVVDEKEVDEVIARIRRNMAELVPVAETRPGADGDVVVLDFAAFENGEPIEGVSAENFQLSLGEKQSLEDFENLVKTIPAGQEAEGPITFPDDFLNPDFAGKTVTMKVKVHAVKERRLPEIDDALAQKAGGFESMEKMRETVVTSYMQSREQLHKATAQKSMLDKLLKMVDFALPESMVDMYVGNLIEDMRVKMERQGRGLESLGKTPEQLREQVLPEAQQIARSQIFLLAAGRKEAVEVSEQEVDGQLQQLAMRSGQDFDTLKDYYVRNGLIFNLRDRLIADKAMDAIYAKANVTMVDPAPAA</sequence>
<evidence type="ECO:0000255" key="1">
    <source>
        <dbReference type="HAMAP-Rule" id="MF_00303"/>
    </source>
</evidence>
<reference key="1">
    <citation type="journal article" date="2004" name="Nat. Biotechnol.">
        <title>The genome sequence of the anaerobic, sulfate-reducing bacterium Desulfovibrio vulgaris Hildenborough.</title>
        <authorList>
            <person name="Heidelberg J.F."/>
            <person name="Seshadri R."/>
            <person name="Haveman S.A."/>
            <person name="Hemme C.L."/>
            <person name="Paulsen I.T."/>
            <person name="Kolonay J.F."/>
            <person name="Eisen J.A."/>
            <person name="Ward N.L."/>
            <person name="Methe B.A."/>
            <person name="Brinkac L.M."/>
            <person name="Daugherty S.C."/>
            <person name="DeBoy R.T."/>
            <person name="Dodson R.J."/>
            <person name="Durkin A.S."/>
            <person name="Madupu R."/>
            <person name="Nelson W.C."/>
            <person name="Sullivan S.A."/>
            <person name="Fouts D.E."/>
            <person name="Haft D.H."/>
            <person name="Selengut J."/>
            <person name="Peterson J.D."/>
            <person name="Davidsen T.M."/>
            <person name="Zafar N."/>
            <person name="Zhou L."/>
            <person name="Radune D."/>
            <person name="Dimitrov G."/>
            <person name="Hance M."/>
            <person name="Tran K."/>
            <person name="Khouri H.M."/>
            <person name="Gill J."/>
            <person name="Utterback T.R."/>
            <person name="Feldblyum T.V."/>
            <person name="Wall J.D."/>
            <person name="Voordouw G."/>
            <person name="Fraser C.M."/>
        </authorList>
    </citation>
    <scope>NUCLEOTIDE SEQUENCE [LARGE SCALE GENOMIC DNA]</scope>
    <source>
        <strain>ATCC 29579 / DSM 644 / CCUG 34227 / NCIMB 8303 / VKM B-1760 / Hildenborough</strain>
    </source>
</reference>
<keyword id="KW-0131">Cell cycle</keyword>
<keyword id="KW-0132">Cell division</keyword>
<keyword id="KW-0143">Chaperone</keyword>
<keyword id="KW-0963">Cytoplasm</keyword>
<keyword id="KW-0413">Isomerase</keyword>
<keyword id="KW-1185">Reference proteome</keyword>
<keyword id="KW-0697">Rotamase</keyword>
<gene>
    <name evidence="1" type="primary">tig</name>
    <name type="ordered locus">DVU_1334</name>
</gene>